<gene>
    <name evidence="1" type="primary">nrdI</name>
    <name type="ordered locus">SSPA2485</name>
</gene>
<sequence>MSALVYFSSSSENTHRFMQRLGLPATRIPLNERERIRVDEPYILVVPSYGGGGMAGAVPRQVIRFLNDEHNRARIRGVIASGNRNFGDAWGCAGDVIAQKYGVPWLYRFELMGTQRDIDNVRRGVNEFWQQLPRSA</sequence>
<reference key="1">
    <citation type="journal article" date="2009" name="BMC Genomics">
        <title>Pseudogene accumulation in the evolutionary histories of Salmonella enterica serovars Paratyphi A and Typhi.</title>
        <authorList>
            <person name="Holt K.E."/>
            <person name="Thomson N.R."/>
            <person name="Wain J."/>
            <person name="Langridge G.C."/>
            <person name="Hasan R."/>
            <person name="Bhutta Z.A."/>
            <person name="Quail M.A."/>
            <person name="Norbertczak H."/>
            <person name="Walker D."/>
            <person name="Simmonds M."/>
            <person name="White B."/>
            <person name="Bason N."/>
            <person name="Mungall K."/>
            <person name="Dougan G."/>
            <person name="Parkhill J."/>
        </authorList>
    </citation>
    <scope>NUCLEOTIDE SEQUENCE [LARGE SCALE GENOMIC DNA]</scope>
    <source>
        <strain>AKU_12601</strain>
    </source>
</reference>
<evidence type="ECO:0000255" key="1">
    <source>
        <dbReference type="HAMAP-Rule" id="MF_00128"/>
    </source>
</evidence>
<proteinExistence type="inferred from homology"/>
<organism>
    <name type="scientific">Salmonella paratyphi A (strain AKU_12601)</name>
    <dbReference type="NCBI Taxonomy" id="554290"/>
    <lineage>
        <taxon>Bacteria</taxon>
        <taxon>Pseudomonadati</taxon>
        <taxon>Pseudomonadota</taxon>
        <taxon>Gammaproteobacteria</taxon>
        <taxon>Enterobacterales</taxon>
        <taxon>Enterobacteriaceae</taxon>
        <taxon>Salmonella</taxon>
    </lineage>
</organism>
<name>NRDI_SALPK</name>
<protein>
    <recommendedName>
        <fullName evidence="1">Protein NrdI</fullName>
    </recommendedName>
</protein>
<accession>B5BEM1</accession>
<dbReference type="EMBL" id="FM200053">
    <property type="protein sequence ID" value="CAR60719.1"/>
    <property type="molecule type" value="Genomic_DNA"/>
</dbReference>
<dbReference type="RefSeq" id="WP_001275411.1">
    <property type="nucleotide sequence ID" value="NC_011147.1"/>
</dbReference>
<dbReference type="SMR" id="B5BEM1"/>
<dbReference type="KEGG" id="sek:SSPA2485"/>
<dbReference type="HOGENOM" id="CLU_114845_0_0_6"/>
<dbReference type="Proteomes" id="UP000001869">
    <property type="component" value="Chromosome"/>
</dbReference>
<dbReference type="GO" id="GO:0010181">
    <property type="term" value="F:FMN binding"/>
    <property type="evidence" value="ECO:0007669"/>
    <property type="project" value="InterPro"/>
</dbReference>
<dbReference type="GO" id="GO:0036211">
    <property type="term" value="P:protein modification process"/>
    <property type="evidence" value="ECO:0007669"/>
    <property type="project" value="InterPro"/>
</dbReference>
<dbReference type="FunFam" id="3.40.50.360:FF:000005">
    <property type="entry name" value="Protein NrdI"/>
    <property type="match status" value="1"/>
</dbReference>
<dbReference type="Gene3D" id="3.40.50.360">
    <property type="match status" value="1"/>
</dbReference>
<dbReference type="HAMAP" id="MF_00128">
    <property type="entry name" value="NrdI"/>
    <property type="match status" value="1"/>
</dbReference>
<dbReference type="InterPro" id="IPR029039">
    <property type="entry name" value="Flavoprotein-like_sf"/>
</dbReference>
<dbReference type="InterPro" id="IPR020852">
    <property type="entry name" value="RNR_Ib_NrdI_bac"/>
</dbReference>
<dbReference type="InterPro" id="IPR004465">
    <property type="entry name" value="RNR_NrdI"/>
</dbReference>
<dbReference type="NCBIfam" id="TIGR00333">
    <property type="entry name" value="nrdI"/>
    <property type="match status" value="1"/>
</dbReference>
<dbReference type="PANTHER" id="PTHR37297">
    <property type="entry name" value="PROTEIN NRDI"/>
    <property type="match status" value="1"/>
</dbReference>
<dbReference type="PANTHER" id="PTHR37297:SF1">
    <property type="entry name" value="PROTEIN NRDI"/>
    <property type="match status" value="1"/>
</dbReference>
<dbReference type="Pfam" id="PF07972">
    <property type="entry name" value="Flavodoxin_NdrI"/>
    <property type="match status" value="1"/>
</dbReference>
<dbReference type="PIRSF" id="PIRSF005087">
    <property type="entry name" value="NrdI"/>
    <property type="match status" value="1"/>
</dbReference>
<dbReference type="SUPFAM" id="SSF52218">
    <property type="entry name" value="Flavoproteins"/>
    <property type="match status" value="1"/>
</dbReference>
<comment type="function">
    <text evidence="1">Probably involved in ribonucleotide reductase function.</text>
</comment>
<comment type="similarity">
    <text evidence="1">Belongs to the NrdI family.</text>
</comment>
<feature type="chain" id="PRO_1000095633" description="Protein NrdI">
    <location>
        <begin position="1"/>
        <end position="136"/>
    </location>
</feature>